<sequence>MEGVDLLGFLIITLNCNVTMVGKLWFVLTMLLRMLVIVLAGRPVYQDEQERFVCNTLQPGCANVCYDVFSPVSHLRFWLIQGVCVLLPSAVFSVYVLHRGATLAALGPRRCPDPREPASGQRRCPRPFGERGGLQVPDFSAGYIIHLLLRTLLEAAFGALHYFLFGFLAPKKFPCTRPPCTGVVDCYVSRPTEKSLLMLFLWAVSALSFLLGLADLVCSLRRRMRRRPGPPTSPSIRKQSGASGHAEGRRTDEEGGREEEGAPAPPGARAGGEGAGSPRRTSRVSGHTKIPDEDESEVTSSASEKLGRQPRGRPHREAAQDPRGSGSEEQPSAAPSRLAAPPSCSSLQPPDPPASSSGAPHLRARKSEWV</sequence>
<comment type="function">
    <text evidence="1">One gap junction consists of a cluster of closely packed pairs of transmembrane channels, the connexons, through which materials of low MW diffuse from one cell to a neighboring cell.</text>
</comment>
<comment type="subunit">
    <text evidence="1">A connexon is composed of a hexamer of connexins.</text>
</comment>
<comment type="subcellular location">
    <subcellularLocation>
        <location evidence="1">Cell membrane</location>
        <topology evidence="1">Multi-pass membrane protein</topology>
    </subcellularLocation>
    <subcellularLocation>
        <location evidence="1">Cell junction</location>
        <location evidence="1">Gap junction</location>
    </subcellularLocation>
</comment>
<comment type="tissue specificity">
    <text evidence="4">Expressed in pancreas, kidney, skeletal muscle, liver, placenta, and heart.</text>
</comment>
<comment type="similarity">
    <text evidence="6">Belongs to the connexin family. Delta-type subfamily.</text>
</comment>
<keyword id="KW-0002">3D-structure</keyword>
<keyword id="KW-0965">Cell junction</keyword>
<keyword id="KW-1003">Cell membrane</keyword>
<keyword id="KW-0303">Gap junction</keyword>
<keyword id="KW-0472">Membrane</keyword>
<keyword id="KW-1267">Proteomics identification</keyword>
<keyword id="KW-1185">Reference proteome</keyword>
<keyword id="KW-0812">Transmembrane</keyword>
<keyword id="KW-1133">Transmembrane helix</keyword>
<name>CXD4_HUMAN</name>
<feature type="chain" id="PRO_0000312991" description="Gap junction delta-4 protein">
    <location>
        <begin position="1"/>
        <end position="370"/>
    </location>
</feature>
<feature type="topological domain" description="Cytoplasmic" evidence="2">
    <location>
        <begin position="1"/>
        <end position="19"/>
    </location>
</feature>
<feature type="transmembrane region" description="Helical" evidence="2">
    <location>
        <begin position="20"/>
        <end position="40"/>
    </location>
</feature>
<feature type="topological domain" description="Extracellular" evidence="2">
    <location>
        <begin position="41"/>
        <end position="76"/>
    </location>
</feature>
<feature type="transmembrane region" description="Helical" evidence="2">
    <location>
        <begin position="77"/>
        <end position="97"/>
    </location>
</feature>
<feature type="topological domain" description="Cytoplasmic" evidence="2">
    <location>
        <begin position="98"/>
        <end position="146"/>
    </location>
</feature>
<feature type="transmembrane region" description="Helical" evidence="2">
    <location>
        <begin position="147"/>
        <end position="167"/>
    </location>
</feature>
<feature type="topological domain" description="Extracellular" evidence="2">
    <location>
        <begin position="168"/>
        <end position="196"/>
    </location>
</feature>
<feature type="transmembrane region" description="Helical" evidence="2">
    <location>
        <begin position="197"/>
        <end position="217"/>
    </location>
</feature>
<feature type="topological domain" description="Cytoplasmic" evidence="2">
    <location>
        <begin position="218"/>
        <end position="370"/>
    </location>
</feature>
<feature type="region of interest" description="Disordered" evidence="3">
    <location>
        <begin position="224"/>
        <end position="370"/>
    </location>
</feature>
<feature type="compositionally biased region" description="Basic and acidic residues" evidence="3">
    <location>
        <begin position="246"/>
        <end position="260"/>
    </location>
</feature>
<feature type="compositionally biased region" description="Low complexity" evidence="3">
    <location>
        <begin position="331"/>
        <end position="346"/>
    </location>
</feature>
<feature type="sequence variant" id="VAR_047626" description="In dbSNP:rs35398622.">
    <original>A</original>
    <variation>V</variation>
    <location>
        <position position="90"/>
    </location>
</feature>
<feature type="sequence variant" id="VAR_037640" description="In a colorectal cancer sample; somatic mutation." evidence="5">
    <original>R</original>
    <variation>H</variation>
    <location>
        <position position="269"/>
    </location>
</feature>
<feature type="sequence variant" id="VAR_037641" description="In a colorectal cancer sample; somatic mutation; dbSNP:rs773395724." evidence="5">
    <original>G</original>
    <variation>R</variation>
    <location>
        <position position="271"/>
    </location>
</feature>
<feature type="sequence conflict" description="In Ref. 2; BAC11028." evidence="6" ref="2">
    <original>S</original>
    <variation>G</variation>
    <location>
        <position position="205"/>
    </location>
</feature>
<feature type="helix" evidence="7">
    <location>
        <begin position="9"/>
        <end position="12"/>
    </location>
</feature>
<feature type="helix" evidence="7">
    <location>
        <begin position="14"/>
        <end position="16"/>
    </location>
</feature>
<feature type="helix" evidence="7">
    <location>
        <begin position="20"/>
        <end position="31"/>
    </location>
</feature>
<feature type="helix" evidence="7">
    <location>
        <begin position="34"/>
        <end position="39"/>
    </location>
</feature>
<feature type="helix" evidence="7">
    <location>
        <begin position="41"/>
        <end position="44"/>
    </location>
</feature>
<feature type="turn" evidence="7">
    <location>
        <begin position="48"/>
        <end position="51"/>
    </location>
</feature>
<feature type="strand" evidence="7">
    <location>
        <begin position="53"/>
        <end position="55"/>
    </location>
</feature>
<feature type="helix" evidence="7">
    <location>
        <begin position="61"/>
        <end position="69"/>
    </location>
</feature>
<feature type="helix" evidence="7">
    <location>
        <begin position="74"/>
        <end position="85"/>
    </location>
</feature>
<feature type="helix" evidence="7">
    <location>
        <begin position="87"/>
        <end position="101"/>
    </location>
</feature>
<feature type="turn" evidence="7">
    <location>
        <begin position="102"/>
        <end position="106"/>
    </location>
</feature>
<feature type="helix" evidence="7">
    <location>
        <begin position="141"/>
        <end position="165"/>
    </location>
</feature>
<feature type="strand" evidence="7">
    <location>
        <begin position="171"/>
        <end position="175"/>
    </location>
</feature>
<feature type="strand" evidence="8">
    <location>
        <begin position="178"/>
        <end position="182"/>
    </location>
</feature>
<feature type="strand" evidence="7">
    <location>
        <begin position="184"/>
        <end position="187"/>
    </location>
</feature>
<feature type="helix" evidence="7">
    <location>
        <begin position="193"/>
        <end position="225"/>
    </location>
</feature>
<dbReference type="EMBL" id="AJ414564">
    <property type="protein sequence ID" value="CAC93846.1"/>
    <property type="molecule type" value="mRNA"/>
</dbReference>
<dbReference type="EMBL" id="AK074504">
    <property type="protein sequence ID" value="BAC11028.1"/>
    <property type="molecule type" value="mRNA"/>
</dbReference>
<dbReference type="EMBL" id="AL121749">
    <property type="status" value="NOT_ANNOTATED_CDS"/>
    <property type="molecule type" value="Genomic_DNA"/>
</dbReference>
<dbReference type="EMBL" id="CH471072">
    <property type="protein sequence ID" value="EAW85910.1"/>
    <property type="molecule type" value="Genomic_DNA"/>
</dbReference>
<dbReference type="CCDS" id="CCDS7191.1"/>
<dbReference type="RefSeq" id="NP_699199.2">
    <property type="nucleotide sequence ID" value="NM_153368.3"/>
</dbReference>
<dbReference type="PDB" id="8GN7">
    <property type="method" value="EM"/>
    <property type="resolution" value="3.00 A"/>
    <property type="chains" value="A/B/G/J/M/P/S/V/Y/b=1-233"/>
</dbReference>
<dbReference type="PDB" id="8GN8">
    <property type="method" value="EM"/>
    <property type="resolution" value="3.50 A"/>
    <property type="chains" value="A/B/C/D/E=1-233"/>
</dbReference>
<dbReference type="PDB" id="8GNB">
    <property type="method" value="EM"/>
    <property type="resolution" value="3.90 A"/>
    <property type="chains" value="A/B/C/D/E/F/G/H/I/J=1-233"/>
</dbReference>
<dbReference type="PDBsum" id="8GN7"/>
<dbReference type="PDBsum" id="8GN8"/>
<dbReference type="PDBsum" id="8GNB"/>
<dbReference type="EMDB" id="EMD-34156"/>
<dbReference type="EMDB" id="EMD-34157"/>
<dbReference type="EMDB" id="EMD-34159"/>
<dbReference type="EMDB" id="EMD-35134"/>
<dbReference type="EMDB" id="EMD-35138"/>
<dbReference type="EMDB" id="EMD-35140"/>
<dbReference type="EMDB" id="EMD-35141"/>
<dbReference type="SMR" id="Q96KN9"/>
<dbReference type="BioGRID" id="128574">
    <property type="interactions" value="20"/>
</dbReference>
<dbReference type="FunCoup" id="Q96KN9">
    <property type="interactions" value="5"/>
</dbReference>
<dbReference type="IntAct" id="Q96KN9">
    <property type="interactions" value="8"/>
</dbReference>
<dbReference type="STRING" id="9606.ENSP00000315070"/>
<dbReference type="TCDB" id="1.A.24.1.8">
    <property type="family name" value="the gap junction-forming connexin (connexin) family"/>
</dbReference>
<dbReference type="iPTMnet" id="Q96KN9"/>
<dbReference type="PhosphoSitePlus" id="Q96KN9"/>
<dbReference type="BioMuta" id="GJD4"/>
<dbReference type="DMDM" id="74751985"/>
<dbReference type="jPOST" id="Q96KN9"/>
<dbReference type="MassIVE" id="Q96KN9"/>
<dbReference type="PaxDb" id="9606-ENSP00000315070"/>
<dbReference type="PeptideAtlas" id="Q96KN9"/>
<dbReference type="Antibodypedia" id="26696">
    <property type="antibodies" value="47 antibodies from 12 providers"/>
</dbReference>
<dbReference type="DNASU" id="219770"/>
<dbReference type="Ensembl" id="ENST00000321660.2">
    <property type="protein sequence ID" value="ENSP00000315070.1"/>
    <property type="gene ID" value="ENSG00000177291.4"/>
</dbReference>
<dbReference type="GeneID" id="219770"/>
<dbReference type="KEGG" id="hsa:219770"/>
<dbReference type="MANE-Select" id="ENST00000321660.2">
    <property type="protein sequence ID" value="ENSP00000315070.1"/>
    <property type="RefSeq nucleotide sequence ID" value="NM_153368.3"/>
    <property type="RefSeq protein sequence ID" value="NP_699199.2"/>
</dbReference>
<dbReference type="UCSC" id="uc001iyy.1">
    <property type="organism name" value="human"/>
</dbReference>
<dbReference type="AGR" id="HGNC:23296"/>
<dbReference type="CTD" id="219770"/>
<dbReference type="DisGeNET" id="219770"/>
<dbReference type="GeneCards" id="GJD4"/>
<dbReference type="HGNC" id="HGNC:23296">
    <property type="gene designation" value="GJD4"/>
</dbReference>
<dbReference type="HPA" id="ENSG00000177291">
    <property type="expression patterns" value="Not detected"/>
</dbReference>
<dbReference type="MIM" id="611922">
    <property type="type" value="gene"/>
</dbReference>
<dbReference type="neXtProt" id="NX_Q96KN9"/>
<dbReference type="OpenTargets" id="ENSG00000177291"/>
<dbReference type="PharmGKB" id="PA162389714"/>
<dbReference type="VEuPathDB" id="HostDB:ENSG00000177291"/>
<dbReference type="eggNOG" id="ENOG502QWIV">
    <property type="taxonomic scope" value="Eukaryota"/>
</dbReference>
<dbReference type="GeneTree" id="ENSGT01130000278343"/>
<dbReference type="HOGENOM" id="CLU_037388_3_0_1"/>
<dbReference type="InParanoid" id="Q96KN9"/>
<dbReference type="OMA" id="CTRPPCT"/>
<dbReference type="OrthoDB" id="9943496at2759"/>
<dbReference type="PAN-GO" id="Q96KN9">
    <property type="GO annotations" value="3 GO annotations based on evolutionary models"/>
</dbReference>
<dbReference type="PhylomeDB" id="Q96KN9"/>
<dbReference type="TreeFam" id="TF329606"/>
<dbReference type="PathwayCommons" id="Q96KN9"/>
<dbReference type="Reactome" id="R-HSA-190861">
    <property type="pathway name" value="Gap junction assembly"/>
</dbReference>
<dbReference type="BioGRID-ORCS" id="219770">
    <property type="hits" value="17 hits in 1139 CRISPR screens"/>
</dbReference>
<dbReference type="ChiTaRS" id="GJD4">
    <property type="organism name" value="human"/>
</dbReference>
<dbReference type="GeneWiki" id="GJD4"/>
<dbReference type="GenomeRNAi" id="219770"/>
<dbReference type="Pharos" id="Q96KN9">
    <property type="development level" value="Tdark"/>
</dbReference>
<dbReference type="PRO" id="PR:Q96KN9"/>
<dbReference type="Proteomes" id="UP000005640">
    <property type="component" value="Chromosome 10"/>
</dbReference>
<dbReference type="RNAct" id="Q96KN9">
    <property type="molecule type" value="protein"/>
</dbReference>
<dbReference type="Bgee" id="ENSG00000177291">
    <property type="expression patterns" value="Expressed in primordial germ cell in gonad and 30 other cell types or tissues"/>
</dbReference>
<dbReference type="GO" id="GO:0005922">
    <property type="term" value="C:connexin complex"/>
    <property type="evidence" value="ECO:0000318"/>
    <property type="project" value="GO_Central"/>
</dbReference>
<dbReference type="GO" id="GO:0005243">
    <property type="term" value="F:gap junction channel activity"/>
    <property type="evidence" value="ECO:0000318"/>
    <property type="project" value="GO_Central"/>
</dbReference>
<dbReference type="GO" id="GO:0007267">
    <property type="term" value="P:cell-cell signaling"/>
    <property type="evidence" value="ECO:0000318"/>
    <property type="project" value="GO_Central"/>
</dbReference>
<dbReference type="GO" id="GO:0014717">
    <property type="term" value="P:regulation of satellite cell activation involved in skeletal muscle regeneration"/>
    <property type="evidence" value="ECO:0007669"/>
    <property type="project" value="Ensembl"/>
</dbReference>
<dbReference type="Gene3D" id="1.20.1440.80">
    <property type="entry name" value="Gap junction channel protein cysteine-rich domain"/>
    <property type="match status" value="1"/>
</dbReference>
<dbReference type="InterPro" id="IPR000500">
    <property type="entry name" value="Connexin"/>
</dbReference>
<dbReference type="InterPro" id="IPR019570">
    <property type="entry name" value="Connexin_CCC"/>
</dbReference>
<dbReference type="InterPro" id="IPR017990">
    <property type="entry name" value="Connexin_CS"/>
</dbReference>
<dbReference type="InterPro" id="IPR013092">
    <property type="entry name" value="Connexin_N"/>
</dbReference>
<dbReference type="InterPro" id="IPR038359">
    <property type="entry name" value="Connexin_N_sf"/>
</dbReference>
<dbReference type="PANTHER" id="PTHR11984">
    <property type="entry name" value="CONNEXIN"/>
    <property type="match status" value="1"/>
</dbReference>
<dbReference type="PANTHER" id="PTHR11984:SF3">
    <property type="entry name" value="GAP JUNCTION DELTA-4 PROTEIN"/>
    <property type="match status" value="1"/>
</dbReference>
<dbReference type="Pfam" id="PF00029">
    <property type="entry name" value="Connexin"/>
    <property type="match status" value="1"/>
</dbReference>
<dbReference type="PRINTS" id="PR00206">
    <property type="entry name" value="CONNEXIN"/>
</dbReference>
<dbReference type="SMART" id="SM00037">
    <property type="entry name" value="CNX"/>
    <property type="match status" value="1"/>
</dbReference>
<dbReference type="SMART" id="SM01089">
    <property type="entry name" value="Connexin_CCC"/>
    <property type="match status" value="1"/>
</dbReference>
<dbReference type="PROSITE" id="PS00407">
    <property type="entry name" value="CONNEXINS_1"/>
    <property type="match status" value="1"/>
</dbReference>
<dbReference type="PROSITE" id="PS00408">
    <property type="entry name" value="CONNEXINS_2"/>
    <property type="match status" value="1"/>
</dbReference>
<accession>Q96KN9</accession>
<accession>Q8N2R7</accession>
<organism>
    <name type="scientific">Homo sapiens</name>
    <name type="common">Human</name>
    <dbReference type="NCBI Taxonomy" id="9606"/>
    <lineage>
        <taxon>Eukaryota</taxon>
        <taxon>Metazoa</taxon>
        <taxon>Chordata</taxon>
        <taxon>Craniata</taxon>
        <taxon>Vertebrata</taxon>
        <taxon>Euteleostomi</taxon>
        <taxon>Mammalia</taxon>
        <taxon>Eutheria</taxon>
        <taxon>Euarchontoglires</taxon>
        <taxon>Primates</taxon>
        <taxon>Haplorrhini</taxon>
        <taxon>Catarrhini</taxon>
        <taxon>Hominidae</taxon>
        <taxon>Homo</taxon>
    </lineage>
</organism>
<evidence type="ECO:0000250" key="1"/>
<evidence type="ECO:0000255" key="2"/>
<evidence type="ECO:0000256" key="3">
    <source>
        <dbReference type="SAM" id="MobiDB-lite"/>
    </source>
</evidence>
<evidence type="ECO:0000269" key="4">
    <source>
    </source>
</evidence>
<evidence type="ECO:0000269" key="5">
    <source>
    </source>
</evidence>
<evidence type="ECO:0000305" key="6"/>
<evidence type="ECO:0007829" key="7">
    <source>
        <dbReference type="PDB" id="8GN7"/>
    </source>
</evidence>
<evidence type="ECO:0007829" key="8">
    <source>
        <dbReference type="PDB" id="8GN8"/>
    </source>
</evidence>
<protein>
    <recommendedName>
        <fullName>Gap junction delta-4 protein</fullName>
    </recommendedName>
    <alternativeName>
        <fullName>Connexin-40.1</fullName>
        <shortName>Cx40.1</shortName>
    </alternativeName>
</protein>
<gene>
    <name type="primary">GJD4</name>
    <name type="synonym">CX40.1</name>
</gene>
<proteinExistence type="evidence at protein level"/>
<reference key="1">
    <citation type="journal article" date="2002" name="Biol. Chem.">
        <title>Structural and functional diversity of connexin genes in the mouse and human genome.</title>
        <authorList>
            <person name="Willecke K."/>
            <person name="Eiberger J."/>
            <person name="Degen J."/>
            <person name="Eckardt D."/>
            <person name="Romualdi A."/>
            <person name="Guldenagel M."/>
            <person name="Deutsch U."/>
            <person name="Soehl G."/>
        </authorList>
    </citation>
    <scope>NUCLEOTIDE SEQUENCE [MRNA]</scope>
</reference>
<reference key="2">
    <citation type="journal article" date="2005" name="DNA Res.">
        <title>Signal sequence and keyword trap in silico for selection of full-length human cDNAs encoding secretion or membrane proteins from oligo-capped cDNA libraries.</title>
        <authorList>
            <person name="Otsuki T."/>
            <person name="Ota T."/>
            <person name="Nishikawa T."/>
            <person name="Hayashi K."/>
            <person name="Suzuki Y."/>
            <person name="Yamamoto J."/>
            <person name="Wakamatsu A."/>
            <person name="Kimura K."/>
            <person name="Sakamoto K."/>
            <person name="Hatano N."/>
            <person name="Kawai Y."/>
            <person name="Ishii S."/>
            <person name="Saito K."/>
            <person name="Kojima S."/>
            <person name="Sugiyama T."/>
            <person name="Ono T."/>
            <person name="Okano K."/>
            <person name="Yoshikawa Y."/>
            <person name="Aotsuka S."/>
            <person name="Sasaki N."/>
            <person name="Hattori A."/>
            <person name="Okumura K."/>
            <person name="Nagai K."/>
            <person name="Sugano S."/>
            <person name="Isogai T."/>
        </authorList>
    </citation>
    <scope>NUCLEOTIDE SEQUENCE [LARGE SCALE MRNA]</scope>
</reference>
<reference key="3">
    <citation type="journal article" date="2004" name="Nature">
        <title>The DNA sequence and comparative analysis of human chromosome 10.</title>
        <authorList>
            <person name="Deloukas P."/>
            <person name="Earthrowl M.E."/>
            <person name="Grafham D.V."/>
            <person name="Rubenfield M."/>
            <person name="French L."/>
            <person name="Steward C.A."/>
            <person name="Sims S.K."/>
            <person name="Jones M.C."/>
            <person name="Searle S."/>
            <person name="Scott C."/>
            <person name="Howe K."/>
            <person name="Hunt S.E."/>
            <person name="Andrews T.D."/>
            <person name="Gilbert J.G.R."/>
            <person name="Swarbreck D."/>
            <person name="Ashurst J.L."/>
            <person name="Taylor A."/>
            <person name="Battles J."/>
            <person name="Bird C.P."/>
            <person name="Ainscough R."/>
            <person name="Almeida J.P."/>
            <person name="Ashwell R.I.S."/>
            <person name="Ambrose K.D."/>
            <person name="Babbage A.K."/>
            <person name="Bagguley C.L."/>
            <person name="Bailey J."/>
            <person name="Banerjee R."/>
            <person name="Bates K."/>
            <person name="Beasley H."/>
            <person name="Bray-Allen S."/>
            <person name="Brown A.J."/>
            <person name="Brown J.Y."/>
            <person name="Burford D.C."/>
            <person name="Burrill W."/>
            <person name="Burton J."/>
            <person name="Cahill P."/>
            <person name="Camire D."/>
            <person name="Carter N.P."/>
            <person name="Chapman J.C."/>
            <person name="Clark S.Y."/>
            <person name="Clarke G."/>
            <person name="Clee C.M."/>
            <person name="Clegg S."/>
            <person name="Corby N."/>
            <person name="Coulson A."/>
            <person name="Dhami P."/>
            <person name="Dutta I."/>
            <person name="Dunn M."/>
            <person name="Faulkner L."/>
            <person name="Frankish A."/>
            <person name="Frankland J.A."/>
            <person name="Garner P."/>
            <person name="Garnett J."/>
            <person name="Gribble S."/>
            <person name="Griffiths C."/>
            <person name="Grocock R."/>
            <person name="Gustafson E."/>
            <person name="Hammond S."/>
            <person name="Harley J.L."/>
            <person name="Hart E."/>
            <person name="Heath P.D."/>
            <person name="Ho T.P."/>
            <person name="Hopkins B."/>
            <person name="Horne J."/>
            <person name="Howden P.J."/>
            <person name="Huckle E."/>
            <person name="Hynds C."/>
            <person name="Johnson C."/>
            <person name="Johnson D."/>
            <person name="Kana A."/>
            <person name="Kay M."/>
            <person name="Kimberley A.M."/>
            <person name="Kershaw J.K."/>
            <person name="Kokkinaki M."/>
            <person name="Laird G.K."/>
            <person name="Lawlor S."/>
            <person name="Lee H.M."/>
            <person name="Leongamornlert D.A."/>
            <person name="Laird G."/>
            <person name="Lloyd C."/>
            <person name="Lloyd D.M."/>
            <person name="Loveland J."/>
            <person name="Lovell J."/>
            <person name="McLaren S."/>
            <person name="McLay K.E."/>
            <person name="McMurray A."/>
            <person name="Mashreghi-Mohammadi M."/>
            <person name="Matthews L."/>
            <person name="Milne S."/>
            <person name="Nickerson T."/>
            <person name="Nguyen M."/>
            <person name="Overton-Larty E."/>
            <person name="Palmer S.A."/>
            <person name="Pearce A.V."/>
            <person name="Peck A.I."/>
            <person name="Pelan S."/>
            <person name="Phillimore B."/>
            <person name="Porter K."/>
            <person name="Rice C.M."/>
            <person name="Rogosin A."/>
            <person name="Ross M.T."/>
            <person name="Sarafidou T."/>
            <person name="Sehra H.K."/>
            <person name="Shownkeen R."/>
            <person name="Skuce C.D."/>
            <person name="Smith M."/>
            <person name="Standring L."/>
            <person name="Sycamore N."/>
            <person name="Tester J."/>
            <person name="Thorpe A."/>
            <person name="Torcasso W."/>
            <person name="Tracey A."/>
            <person name="Tromans A."/>
            <person name="Tsolas J."/>
            <person name="Wall M."/>
            <person name="Walsh J."/>
            <person name="Wang H."/>
            <person name="Weinstock K."/>
            <person name="West A.P."/>
            <person name="Willey D.L."/>
            <person name="Whitehead S.L."/>
            <person name="Wilming L."/>
            <person name="Wray P.W."/>
            <person name="Young L."/>
            <person name="Chen Y."/>
            <person name="Lovering R.C."/>
            <person name="Moschonas N.K."/>
            <person name="Siebert R."/>
            <person name="Fechtel K."/>
            <person name="Bentley D."/>
            <person name="Durbin R.M."/>
            <person name="Hubbard T."/>
            <person name="Doucette-Stamm L."/>
            <person name="Beck S."/>
            <person name="Smith D.R."/>
            <person name="Rogers J."/>
        </authorList>
    </citation>
    <scope>NUCLEOTIDE SEQUENCE [LARGE SCALE GENOMIC DNA]</scope>
</reference>
<reference key="4">
    <citation type="submission" date="2005-09" db="EMBL/GenBank/DDBJ databases">
        <authorList>
            <person name="Mural R.J."/>
            <person name="Istrail S."/>
            <person name="Sutton G.G."/>
            <person name="Florea L."/>
            <person name="Halpern A.L."/>
            <person name="Mobarry C.M."/>
            <person name="Lippert R."/>
            <person name="Walenz B."/>
            <person name="Shatkay H."/>
            <person name="Dew I."/>
            <person name="Miller J.R."/>
            <person name="Flanigan M.J."/>
            <person name="Edwards N.J."/>
            <person name="Bolanos R."/>
            <person name="Fasulo D."/>
            <person name="Halldorsson B.V."/>
            <person name="Hannenhalli S."/>
            <person name="Turner R."/>
            <person name="Yooseph S."/>
            <person name="Lu F."/>
            <person name="Nusskern D.R."/>
            <person name="Shue B.C."/>
            <person name="Zheng X.H."/>
            <person name="Zhong F."/>
            <person name="Delcher A.L."/>
            <person name="Huson D.H."/>
            <person name="Kravitz S.A."/>
            <person name="Mouchard L."/>
            <person name="Reinert K."/>
            <person name="Remington K.A."/>
            <person name="Clark A.G."/>
            <person name="Waterman M.S."/>
            <person name="Eichler E.E."/>
            <person name="Adams M.D."/>
            <person name="Hunkapiller M.W."/>
            <person name="Myers E.W."/>
            <person name="Venter J.C."/>
        </authorList>
    </citation>
    <scope>NUCLEOTIDE SEQUENCE [LARGE SCALE GENOMIC DNA]</scope>
</reference>
<reference key="5">
    <citation type="journal article" date="2003" name="Cell Commun. Adhes.">
        <title>Expression profiles of the novel human connexin genes hCx30.2, hCx40.1, and hCx62 differ from their putative mouse orthologues.</title>
        <authorList>
            <person name="Soehl G."/>
            <person name="Nielsen P.A."/>
            <person name="Eiberger J."/>
            <person name="Willecke K."/>
        </authorList>
    </citation>
    <scope>TISSUE SPECIFICITY</scope>
</reference>
<reference key="6">
    <citation type="journal article" date="2006" name="Science">
        <title>The consensus coding sequences of human breast and colorectal cancers.</title>
        <authorList>
            <person name="Sjoeblom T."/>
            <person name="Jones S."/>
            <person name="Wood L.D."/>
            <person name="Parsons D.W."/>
            <person name="Lin J."/>
            <person name="Barber T.D."/>
            <person name="Mandelker D."/>
            <person name="Leary R.J."/>
            <person name="Ptak J."/>
            <person name="Silliman N."/>
            <person name="Szabo S."/>
            <person name="Buckhaults P."/>
            <person name="Farrell C."/>
            <person name="Meeh P."/>
            <person name="Markowitz S.D."/>
            <person name="Willis J."/>
            <person name="Dawson D."/>
            <person name="Willson J.K.V."/>
            <person name="Gazdar A.F."/>
            <person name="Hartigan J."/>
            <person name="Wu L."/>
            <person name="Liu C."/>
            <person name="Parmigiani G."/>
            <person name="Park B.H."/>
            <person name="Bachman K.E."/>
            <person name="Papadopoulos N."/>
            <person name="Vogelstein B."/>
            <person name="Kinzler K.W."/>
            <person name="Velculescu V.E."/>
        </authorList>
    </citation>
    <scope>VARIANTS [LARGE SCALE ANALYSIS] HIS-269 AND ARG-271</scope>
</reference>